<reference key="1">
    <citation type="journal article" date="2002" name="Proc. Natl. Acad. Sci. U.S.A.">
        <title>Genome sequence and comparative microarray analysis of serotype M18 group A Streptococcus strains associated with acute rheumatic fever outbreaks.</title>
        <authorList>
            <person name="Smoot J.C."/>
            <person name="Barbian K.D."/>
            <person name="Van Gompel J.J."/>
            <person name="Smoot L.M."/>
            <person name="Chaussee M.S."/>
            <person name="Sylva G.L."/>
            <person name="Sturdevant D.E."/>
            <person name="Ricklefs S.M."/>
            <person name="Porcella S.F."/>
            <person name="Parkins L.D."/>
            <person name="Beres S.B."/>
            <person name="Campbell D.S."/>
            <person name="Smith T.M."/>
            <person name="Zhang Q."/>
            <person name="Kapur V."/>
            <person name="Daly J.A."/>
            <person name="Veasy L.G."/>
            <person name="Musser J.M."/>
        </authorList>
    </citation>
    <scope>NUCLEOTIDE SEQUENCE [LARGE SCALE GENOMIC DNA]</scope>
    <source>
        <strain>MGAS8232</strain>
    </source>
</reference>
<proteinExistence type="inferred from homology"/>
<keyword id="KW-0067">ATP-binding</keyword>
<keyword id="KW-0143">Chaperone</keyword>
<keyword id="KW-0963">Cytoplasm</keyword>
<keyword id="KW-0413">Isomerase</keyword>
<keyword id="KW-0547">Nucleotide-binding</keyword>
<gene>
    <name evidence="2" type="primary">groEL</name>
    <name evidence="2" type="synonym">groL</name>
    <name type="ordered locus">spyM18_2129</name>
</gene>
<accession>Q8NZ56</accession>
<sequence length="543" mass="57079">MAKDIKFSADARAAMVRGVDMLADTVKVTLGPKGRNVVLEKAFGSPLITNDGVTIAKEIELEDHFENMGAKLVSEVASKTNDIAGDGTTTATVLTQAIVHEGLKNVTAGANPIGIRRGIETATATAVEALKAIAQPVSGKEAIAQVAAVSSRSEKVGEYISEAMERVGNDGVITIEESRGMETELEVVEGMQFDRGYLSQYMVTDNEKMVADLENPFILITDKKVSNIQDILPLLEEVLKTNRPLLIIADDVDGEALPTLVLNKIRGTFNVVAVKAPGFGDRRKAMLEDIAILTGGTVITEDLGLELKDATMTALGQAAKITVDKDSTVIVEGSGSSEAIANRIALIKSQLETTTSDFDREKLQERLAKLAGGVAVIKVGAPTETALKEMKLRIEDALNATRAAVEEGIVAGGGTALITVIEKVAALELEGDDATGRNIVLRALEEPVRQIALNAGYEGSVIIDKLKNSPAGTGFNAATGEWVDMIKTGIIDPVKVTRSALQNAASVASLILTTEAVVANKPEPAAPAPAMPAGMDPGMMGGF</sequence>
<dbReference type="EC" id="5.6.1.7" evidence="2"/>
<dbReference type="EMBL" id="AE009949">
    <property type="protein sequence ID" value="AAL98581.1"/>
    <property type="molecule type" value="Genomic_DNA"/>
</dbReference>
<dbReference type="RefSeq" id="WP_011018293.1">
    <property type="nucleotide sequence ID" value="NC_003485.1"/>
</dbReference>
<dbReference type="SMR" id="Q8NZ56"/>
<dbReference type="KEGG" id="spm:spyM18_2129"/>
<dbReference type="HOGENOM" id="CLU_016503_3_0_9"/>
<dbReference type="GO" id="GO:0005737">
    <property type="term" value="C:cytoplasm"/>
    <property type="evidence" value="ECO:0007669"/>
    <property type="project" value="UniProtKB-SubCell"/>
</dbReference>
<dbReference type="GO" id="GO:0005524">
    <property type="term" value="F:ATP binding"/>
    <property type="evidence" value="ECO:0007669"/>
    <property type="project" value="UniProtKB-UniRule"/>
</dbReference>
<dbReference type="GO" id="GO:0140662">
    <property type="term" value="F:ATP-dependent protein folding chaperone"/>
    <property type="evidence" value="ECO:0007669"/>
    <property type="project" value="InterPro"/>
</dbReference>
<dbReference type="GO" id="GO:0016853">
    <property type="term" value="F:isomerase activity"/>
    <property type="evidence" value="ECO:0007669"/>
    <property type="project" value="UniProtKB-KW"/>
</dbReference>
<dbReference type="GO" id="GO:0051082">
    <property type="term" value="F:unfolded protein binding"/>
    <property type="evidence" value="ECO:0007669"/>
    <property type="project" value="UniProtKB-UniRule"/>
</dbReference>
<dbReference type="GO" id="GO:0042026">
    <property type="term" value="P:protein refolding"/>
    <property type="evidence" value="ECO:0007669"/>
    <property type="project" value="UniProtKB-UniRule"/>
</dbReference>
<dbReference type="CDD" id="cd03344">
    <property type="entry name" value="GroEL"/>
    <property type="match status" value="1"/>
</dbReference>
<dbReference type="FunFam" id="1.10.560.10:FF:000001">
    <property type="entry name" value="60 kDa chaperonin"/>
    <property type="match status" value="1"/>
</dbReference>
<dbReference type="FunFam" id="3.50.7.10:FF:000001">
    <property type="entry name" value="60 kDa chaperonin"/>
    <property type="match status" value="1"/>
</dbReference>
<dbReference type="Gene3D" id="3.50.7.10">
    <property type="entry name" value="GroEL"/>
    <property type="match status" value="1"/>
</dbReference>
<dbReference type="Gene3D" id="1.10.560.10">
    <property type="entry name" value="GroEL-like equatorial domain"/>
    <property type="match status" value="1"/>
</dbReference>
<dbReference type="Gene3D" id="3.30.260.10">
    <property type="entry name" value="TCP-1-like chaperonin intermediate domain"/>
    <property type="match status" value="1"/>
</dbReference>
<dbReference type="HAMAP" id="MF_00600">
    <property type="entry name" value="CH60"/>
    <property type="match status" value="1"/>
</dbReference>
<dbReference type="InterPro" id="IPR018370">
    <property type="entry name" value="Chaperonin_Cpn60_CS"/>
</dbReference>
<dbReference type="InterPro" id="IPR001844">
    <property type="entry name" value="Cpn60/GroEL"/>
</dbReference>
<dbReference type="InterPro" id="IPR002423">
    <property type="entry name" value="Cpn60/GroEL/TCP-1"/>
</dbReference>
<dbReference type="InterPro" id="IPR027409">
    <property type="entry name" value="GroEL-like_apical_dom_sf"/>
</dbReference>
<dbReference type="InterPro" id="IPR027413">
    <property type="entry name" value="GROEL-like_equatorial_sf"/>
</dbReference>
<dbReference type="InterPro" id="IPR027410">
    <property type="entry name" value="TCP-1-like_intermed_sf"/>
</dbReference>
<dbReference type="NCBIfam" id="TIGR02348">
    <property type="entry name" value="GroEL"/>
    <property type="match status" value="1"/>
</dbReference>
<dbReference type="NCBIfam" id="NF000592">
    <property type="entry name" value="PRK00013.1"/>
    <property type="match status" value="1"/>
</dbReference>
<dbReference type="NCBIfam" id="NF009487">
    <property type="entry name" value="PRK12849.1"/>
    <property type="match status" value="1"/>
</dbReference>
<dbReference type="NCBIfam" id="NF009488">
    <property type="entry name" value="PRK12850.1"/>
    <property type="match status" value="1"/>
</dbReference>
<dbReference type="NCBIfam" id="NF009489">
    <property type="entry name" value="PRK12851.1"/>
    <property type="match status" value="1"/>
</dbReference>
<dbReference type="PANTHER" id="PTHR45633">
    <property type="entry name" value="60 KDA HEAT SHOCK PROTEIN, MITOCHONDRIAL"/>
    <property type="match status" value="1"/>
</dbReference>
<dbReference type="Pfam" id="PF00118">
    <property type="entry name" value="Cpn60_TCP1"/>
    <property type="match status" value="1"/>
</dbReference>
<dbReference type="PRINTS" id="PR00298">
    <property type="entry name" value="CHAPERONIN60"/>
</dbReference>
<dbReference type="SUPFAM" id="SSF52029">
    <property type="entry name" value="GroEL apical domain-like"/>
    <property type="match status" value="1"/>
</dbReference>
<dbReference type="SUPFAM" id="SSF48592">
    <property type="entry name" value="GroEL equatorial domain-like"/>
    <property type="match status" value="1"/>
</dbReference>
<dbReference type="SUPFAM" id="SSF54849">
    <property type="entry name" value="GroEL-intermediate domain like"/>
    <property type="match status" value="1"/>
</dbReference>
<dbReference type="PROSITE" id="PS00296">
    <property type="entry name" value="CHAPERONINS_CPN60"/>
    <property type="match status" value="1"/>
</dbReference>
<comment type="function">
    <text evidence="2">Together with its co-chaperonin GroES, plays an essential role in assisting protein folding. The GroEL-GroES system forms a nano-cage that allows encapsulation of the non-native substrate proteins and provides a physical environment optimized to promote and accelerate protein folding.</text>
</comment>
<comment type="catalytic activity">
    <reaction evidence="2">
        <text>ATP + H2O + a folded polypeptide = ADP + phosphate + an unfolded polypeptide.</text>
        <dbReference type="EC" id="5.6.1.7"/>
    </reaction>
</comment>
<comment type="subunit">
    <text evidence="2">Forms a cylinder of 14 subunits composed of two heptameric rings stacked back-to-back. Interacts with the co-chaperonin GroES.</text>
</comment>
<comment type="subcellular location">
    <subcellularLocation>
        <location evidence="2">Cytoplasm</location>
    </subcellularLocation>
</comment>
<comment type="similarity">
    <text evidence="2">Belongs to the chaperonin (HSP60) family.</text>
</comment>
<evidence type="ECO:0000250" key="1"/>
<evidence type="ECO:0000255" key="2">
    <source>
        <dbReference type="HAMAP-Rule" id="MF_00600"/>
    </source>
</evidence>
<protein>
    <recommendedName>
        <fullName evidence="2">Chaperonin GroEL</fullName>
        <ecNumber evidence="2">5.6.1.7</ecNumber>
    </recommendedName>
    <alternativeName>
        <fullName evidence="2">60 kDa chaperonin</fullName>
    </alternativeName>
    <alternativeName>
        <fullName evidence="2">Chaperonin-60</fullName>
        <shortName evidence="2">Cpn60</shortName>
    </alternativeName>
</protein>
<organism>
    <name type="scientific">Streptococcus pyogenes serotype M18 (strain MGAS8232)</name>
    <dbReference type="NCBI Taxonomy" id="186103"/>
    <lineage>
        <taxon>Bacteria</taxon>
        <taxon>Bacillati</taxon>
        <taxon>Bacillota</taxon>
        <taxon>Bacilli</taxon>
        <taxon>Lactobacillales</taxon>
        <taxon>Streptococcaceae</taxon>
        <taxon>Streptococcus</taxon>
    </lineage>
</organism>
<feature type="initiator methionine" description="Removed" evidence="1">
    <location>
        <position position="1"/>
    </location>
</feature>
<feature type="chain" id="PRO_0000063561" description="Chaperonin GroEL">
    <location>
        <begin position="2"/>
        <end position="543"/>
    </location>
</feature>
<feature type="binding site" evidence="2">
    <location>
        <begin position="29"/>
        <end position="32"/>
    </location>
    <ligand>
        <name>ATP</name>
        <dbReference type="ChEBI" id="CHEBI:30616"/>
    </ligand>
</feature>
<feature type="binding site" evidence="2">
    <location>
        <begin position="86"/>
        <end position="90"/>
    </location>
    <ligand>
        <name>ATP</name>
        <dbReference type="ChEBI" id="CHEBI:30616"/>
    </ligand>
</feature>
<feature type="binding site" evidence="2">
    <location>
        <position position="413"/>
    </location>
    <ligand>
        <name>ATP</name>
        <dbReference type="ChEBI" id="CHEBI:30616"/>
    </ligand>
</feature>
<feature type="binding site" evidence="2">
    <location>
        <begin position="476"/>
        <end position="478"/>
    </location>
    <ligand>
        <name>ATP</name>
        <dbReference type="ChEBI" id="CHEBI:30616"/>
    </ligand>
</feature>
<feature type="binding site" evidence="2">
    <location>
        <position position="492"/>
    </location>
    <ligand>
        <name>ATP</name>
        <dbReference type="ChEBI" id="CHEBI:30616"/>
    </ligand>
</feature>
<name>CH60_STRP8</name>